<feature type="chain" id="PRO_0000153477" description="Histidinol-phosphate aminotransferase">
    <location>
        <begin position="1"/>
        <end position="346"/>
    </location>
</feature>
<feature type="modified residue" description="N6-(pyridoxal phosphate)lysine" evidence="1">
    <location>
        <position position="209"/>
    </location>
</feature>
<accession>Q8D8Q1</accession>
<reference key="1">
    <citation type="submission" date="2002-12" db="EMBL/GenBank/DDBJ databases">
        <title>Complete genome sequence of Vibrio vulnificus CMCP6.</title>
        <authorList>
            <person name="Rhee J.H."/>
            <person name="Kim S.Y."/>
            <person name="Chung S.S."/>
            <person name="Kim J.J."/>
            <person name="Moon Y.H."/>
            <person name="Jeong H."/>
            <person name="Choy H.E."/>
        </authorList>
    </citation>
    <scope>NUCLEOTIDE SEQUENCE [LARGE SCALE GENOMIC DNA]</scope>
    <source>
        <strain>CMCP6</strain>
    </source>
</reference>
<protein>
    <recommendedName>
        <fullName evidence="1">Histidinol-phosphate aminotransferase</fullName>
        <ecNumber evidence="1">2.6.1.9</ecNumber>
    </recommendedName>
    <alternativeName>
        <fullName evidence="1">Imidazole acetol-phosphate transaminase</fullName>
    </alternativeName>
</protein>
<dbReference type="EC" id="2.6.1.9" evidence="1"/>
<dbReference type="EMBL" id="AE016795">
    <property type="protein sequence ID" value="AAO11251.1"/>
    <property type="molecule type" value="Genomic_DNA"/>
</dbReference>
<dbReference type="RefSeq" id="WP_011080738.1">
    <property type="nucleotide sequence ID" value="NC_004459.3"/>
</dbReference>
<dbReference type="SMR" id="Q8D8Q1"/>
<dbReference type="KEGG" id="vvu:VV1_2918"/>
<dbReference type="HOGENOM" id="CLU_017584_3_1_6"/>
<dbReference type="UniPathway" id="UPA00031">
    <property type="reaction ID" value="UER00012"/>
</dbReference>
<dbReference type="Proteomes" id="UP000002275">
    <property type="component" value="Chromosome 1"/>
</dbReference>
<dbReference type="GO" id="GO:0004400">
    <property type="term" value="F:histidinol-phosphate transaminase activity"/>
    <property type="evidence" value="ECO:0007669"/>
    <property type="project" value="UniProtKB-UniRule"/>
</dbReference>
<dbReference type="GO" id="GO:0030170">
    <property type="term" value="F:pyridoxal phosphate binding"/>
    <property type="evidence" value="ECO:0007669"/>
    <property type="project" value="InterPro"/>
</dbReference>
<dbReference type="GO" id="GO:0000105">
    <property type="term" value="P:L-histidine biosynthetic process"/>
    <property type="evidence" value="ECO:0007669"/>
    <property type="project" value="UniProtKB-UniRule"/>
</dbReference>
<dbReference type="CDD" id="cd00609">
    <property type="entry name" value="AAT_like"/>
    <property type="match status" value="1"/>
</dbReference>
<dbReference type="FunFam" id="3.40.640.10:FF:000032">
    <property type="entry name" value="Histidinol-phosphate aminotransferase"/>
    <property type="match status" value="1"/>
</dbReference>
<dbReference type="Gene3D" id="3.90.1150.10">
    <property type="entry name" value="Aspartate Aminotransferase, domain 1"/>
    <property type="match status" value="1"/>
</dbReference>
<dbReference type="Gene3D" id="3.40.640.10">
    <property type="entry name" value="Type I PLP-dependent aspartate aminotransferase-like (Major domain)"/>
    <property type="match status" value="1"/>
</dbReference>
<dbReference type="HAMAP" id="MF_01023">
    <property type="entry name" value="HisC_aminotrans_2"/>
    <property type="match status" value="1"/>
</dbReference>
<dbReference type="InterPro" id="IPR001917">
    <property type="entry name" value="Aminotrans_II_pyridoxalP_BS"/>
</dbReference>
<dbReference type="InterPro" id="IPR004839">
    <property type="entry name" value="Aminotransferase_I/II_large"/>
</dbReference>
<dbReference type="InterPro" id="IPR005861">
    <property type="entry name" value="HisP_aminotrans"/>
</dbReference>
<dbReference type="InterPro" id="IPR015424">
    <property type="entry name" value="PyrdxlP-dep_Trfase"/>
</dbReference>
<dbReference type="InterPro" id="IPR015421">
    <property type="entry name" value="PyrdxlP-dep_Trfase_major"/>
</dbReference>
<dbReference type="InterPro" id="IPR015422">
    <property type="entry name" value="PyrdxlP-dep_Trfase_small"/>
</dbReference>
<dbReference type="NCBIfam" id="TIGR01141">
    <property type="entry name" value="hisC"/>
    <property type="match status" value="1"/>
</dbReference>
<dbReference type="PANTHER" id="PTHR42885:SF2">
    <property type="entry name" value="HISTIDINOL-PHOSPHATE AMINOTRANSFERASE"/>
    <property type="match status" value="1"/>
</dbReference>
<dbReference type="PANTHER" id="PTHR42885">
    <property type="entry name" value="HISTIDINOL-PHOSPHATE AMINOTRANSFERASE-RELATED"/>
    <property type="match status" value="1"/>
</dbReference>
<dbReference type="Pfam" id="PF00155">
    <property type="entry name" value="Aminotran_1_2"/>
    <property type="match status" value="1"/>
</dbReference>
<dbReference type="SUPFAM" id="SSF53383">
    <property type="entry name" value="PLP-dependent transferases"/>
    <property type="match status" value="1"/>
</dbReference>
<dbReference type="PROSITE" id="PS00599">
    <property type="entry name" value="AA_TRANSFER_CLASS_2"/>
    <property type="match status" value="1"/>
</dbReference>
<gene>
    <name evidence="1" type="primary">hisC</name>
    <name type="ordered locus">VV1_2918</name>
</gene>
<evidence type="ECO:0000255" key="1">
    <source>
        <dbReference type="HAMAP-Rule" id="MF_01023"/>
    </source>
</evidence>
<proteinExistence type="inferred from homology"/>
<sequence length="346" mass="38261">MEKLARKSVQKLTPYLSARRIGGTGDVWLNANESPFDNEYRTNFARLNRYSDCQPKALIAAYAAYAGVKPEQTLTSRGADEGIELLIRAFCETNEDAILYCPPTYGMYSVSAETIGVERKTVPLTEDWQLDLSGIEANLDKVKLVFVCSPNNPTGNLVKREDIIALLEMTKDRAIVVMDEAYIDFCPEASTVDLLAQYSNLAILRTLSKAFALAGLRCGFTLANEELINVLLKVIAPYPVPVPVAEIATQALSEAGLARAKFQVLDLNANRAYLQVGLSMIAGLEVFEGWGNYLLVKFPNGDELFKAAWESGIILRNSPIKDCVRISVGSRDECEKTLGFIRNYYS</sequence>
<organism>
    <name type="scientific">Vibrio vulnificus (strain CMCP6)</name>
    <dbReference type="NCBI Taxonomy" id="216895"/>
    <lineage>
        <taxon>Bacteria</taxon>
        <taxon>Pseudomonadati</taxon>
        <taxon>Pseudomonadota</taxon>
        <taxon>Gammaproteobacteria</taxon>
        <taxon>Vibrionales</taxon>
        <taxon>Vibrionaceae</taxon>
        <taxon>Vibrio</taxon>
    </lineage>
</organism>
<comment type="catalytic activity">
    <reaction evidence="1">
        <text>L-histidinol phosphate + 2-oxoglutarate = 3-(imidazol-4-yl)-2-oxopropyl phosphate + L-glutamate</text>
        <dbReference type="Rhea" id="RHEA:23744"/>
        <dbReference type="ChEBI" id="CHEBI:16810"/>
        <dbReference type="ChEBI" id="CHEBI:29985"/>
        <dbReference type="ChEBI" id="CHEBI:57766"/>
        <dbReference type="ChEBI" id="CHEBI:57980"/>
        <dbReference type="EC" id="2.6.1.9"/>
    </reaction>
</comment>
<comment type="cofactor">
    <cofactor evidence="1">
        <name>pyridoxal 5'-phosphate</name>
        <dbReference type="ChEBI" id="CHEBI:597326"/>
    </cofactor>
</comment>
<comment type="pathway">
    <text evidence="1">Amino-acid biosynthesis; L-histidine biosynthesis; L-histidine from 5-phospho-alpha-D-ribose 1-diphosphate: step 7/9.</text>
</comment>
<comment type="subunit">
    <text evidence="1">Homodimer.</text>
</comment>
<comment type="similarity">
    <text evidence="1">Belongs to the class-II pyridoxal-phosphate-dependent aminotransferase family. Histidinol-phosphate aminotransferase subfamily.</text>
</comment>
<name>HIS8_VIBVU</name>
<keyword id="KW-0028">Amino-acid biosynthesis</keyword>
<keyword id="KW-0032">Aminotransferase</keyword>
<keyword id="KW-0368">Histidine biosynthesis</keyword>
<keyword id="KW-0663">Pyridoxal phosphate</keyword>
<keyword id="KW-0808">Transferase</keyword>